<sequence length="706" mass="75876">MSAIKKTFTYGRHQVTLETGEIARQASGAVVVNMDDTMVLVTVVAKNEVKPGQDFFPLTVDYQEKTYAAGRIPGGFLKRESRPSEGETLISRLIDRPIRPLFPEGFFNEVQIIATVMSSNPEVSADIPALIGASAALSLSGLPFDGPVGAARVGFINGEYVLNPTNAELKDSALDLVVAGTESAVLMVESEAMELPEDIMLGAVVFGHTQMQAAINAINELADEAGADAWDWAPPAEDTAMVDRLKALAEDGLQQAYNIKQKRARMAAVDEVRSKAFAELITADMDTVAANHVKDAFHRLEAGVVRNRILSGQPRIDGRDTRTVRPITIRTGVLPRAHGSALFTRGETQALVVTTLGTGRDEQTIDALEGSYSDRFMLHYNMPPYATGETGRVGSPKRREIGHGRLAKRALLAVLPSKEEFGYTMRVVSEITESNGSSSMASVCGGCLSLMDAGAPLKAHVAGIAMGLIKEGNRFAVLTDILGDEDHLGDMDFKVAGTENGVTALQMDIKITGITKEIMQAALTQAKEGRMHILGIMKASVSETHEMSAYAPRIIAMKINPEKIRDVIGKGGAVIRALTEETGTQIDIQEDGSVKIACTSMEAGELAKKRIEEITAEVEVGKVYEGPVIKLLDFGAIVNVLPGRDGLLHISQIAHERVNTIGDYLKEGQVVRVKILEADEKGRLRLSMKALLEAPAPTSGGEEHAS</sequence>
<comment type="function">
    <text evidence="1">Involved in mRNA degradation. Catalyzes the phosphorolysis of single-stranded polyribonucleotides processively in the 3'- to 5'-direction.</text>
</comment>
<comment type="catalytic activity">
    <reaction evidence="1">
        <text>RNA(n+1) + phosphate = RNA(n) + a ribonucleoside 5'-diphosphate</text>
        <dbReference type="Rhea" id="RHEA:22096"/>
        <dbReference type="Rhea" id="RHEA-COMP:14527"/>
        <dbReference type="Rhea" id="RHEA-COMP:17342"/>
        <dbReference type="ChEBI" id="CHEBI:43474"/>
        <dbReference type="ChEBI" id="CHEBI:57930"/>
        <dbReference type="ChEBI" id="CHEBI:140395"/>
        <dbReference type="EC" id="2.7.7.8"/>
    </reaction>
</comment>
<comment type="cofactor">
    <cofactor evidence="1">
        <name>Mg(2+)</name>
        <dbReference type="ChEBI" id="CHEBI:18420"/>
    </cofactor>
</comment>
<comment type="subcellular location">
    <subcellularLocation>
        <location evidence="1">Cytoplasm</location>
    </subcellularLocation>
</comment>
<comment type="similarity">
    <text evidence="1">Belongs to the polyribonucleotide nucleotidyltransferase family.</text>
</comment>
<gene>
    <name evidence="1" type="primary">pnp</name>
    <name type="ordered locus">Tbd_0693</name>
</gene>
<organism>
    <name type="scientific">Thiobacillus denitrificans (strain ATCC 25259 / T1)</name>
    <dbReference type="NCBI Taxonomy" id="292415"/>
    <lineage>
        <taxon>Bacteria</taxon>
        <taxon>Pseudomonadati</taxon>
        <taxon>Pseudomonadota</taxon>
        <taxon>Betaproteobacteria</taxon>
        <taxon>Nitrosomonadales</taxon>
        <taxon>Thiobacillaceae</taxon>
        <taxon>Thiobacillus</taxon>
    </lineage>
</organism>
<accession>Q3SKX5</accession>
<proteinExistence type="inferred from homology"/>
<reference key="1">
    <citation type="journal article" date="2006" name="J. Bacteriol.">
        <title>The genome sequence of the obligately chemolithoautotrophic, facultatively anaerobic bacterium Thiobacillus denitrificans.</title>
        <authorList>
            <person name="Beller H.R."/>
            <person name="Chain P.S."/>
            <person name="Letain T.E."/>
            <person name="Chakicherla A."/>
            <person name="Larimer F.W."/>
            <person name="Richardson P.M."/>
            <person name="Coleman M.A."/>
            <person name="Wood A.P."/>
            <person name="Kelly D.P."/>
        </authorList>
    </citation>
    <scope>NUCLEOTIDE SEQUENCE [LARGE SCALE GENOMIC DNA]</scope>
    <source>
        <strain>ATCC 25259 / T1</strain>
    </source>
</reference>
<dbReference type="EC" id="2.7.7.8" evidence="1"/>
<dbReference type="EMBL" id="CP000116">
    <property type="protein sequence ID" value="AAZ96646.1"/>
    <property type="molecule type" value="Genomic_DNA"/>
</dbReference>
<dbReference type="RefSeq" id="WP_011311205.1">
    <property type="nucleotide sequence ID" value="NC_007404.1"/>
</dbReference>
<dbReference type="SMR" id="Q3SKX5"/>
<dbReference type="STRING" id="292415.Tbd_0693"/>
<dbReference type="KEGG" id="tbd:Tbd_0693"/>
<dbReference type="eggNOG" id="COG1185">
    <property type="taxonomic scope" value="Bacteria"/>
</dbReference>
<dbReference type="HOGENOM" id="CLU_004217_2_2_4"/>
<dbReference type="OrthoDB" id="9804305at2"/>
<dbReference type="Proteomes" id="UP000008291">
    <property type="component" value="Chromosome"/>
</dbReference>
<dbReference type="GO" id="GO:0005829">
    <property type="term" value="C:cytosol"/>
    <property type="evidence" value="ECO:0007669"/>
    <property type="project" value="TreeGrafter"/>
</dbReference>
<dbReference type="GO" id="GO:0000175">
    <property type="term" value="F:3'-5'-RNA exonuclease activity"/>
    <property type="evidence" value="ECO:0007669"/>
    <property type="project" value="TreeGrafter"/>
</dbReference>
<dbReference type="GO" id="GO:0000287">
    <property type="term" value="F:magnesium ion binding"/>
    <property type="evidence" value="ECO:0007669"/>
    <property type="project" value="UniProtKB-UniRule"/>
</dbReference>
<dbReference type="GO" id="GO:0004654">
    <property type="term" value="F:polyribonucleotide nucleotidyltransferase activity"/>
    <property type="evidence" value="ECO:0007669"/>
    <property type="project" value="UniProtKB-UniRule"/>
</dbReference>
<dbReference type="GO" id="GO:0003723">
    <property type="term" value="F:RNA binding"/>
    <property type="evidence" value="ECO:0007669"/>
    <property type="project" value="UniProtKB-UniRule"/>
</dbReference>
<dbReference type="GO" id="GO:0006402">
    <property type="term" value="P:mRNA catabolic process"/>
    <property type="evidence" value="ECO:0007669"/>
    <property type="project" value="UniProtKB-UniRule"/>
</dbReference>
<dbReference type="GO" id="GO:0006396">
    <property type="term" value="P:RNA processing"/>
    <property type="evidence" value="ECO:0007669"/>
    <property type="project" value="InterPro"/>
</dbReference>
<dbReference type="CDD" id="cd02393">
    <property type="entry name" value="KH-I_PNPase"/>
    <property type="match status" value="1"/>
</dbReference>
<dbReference type="CDD" id="cd11363">
    <property type="entry name" value="RNase_PH_PNPase_1"/>
    <property type="match status" value="1"/>
</dbReference>
<dbReference type="CDD" id="cd11364">
    <property type="entry name" value="RNase_PH_PNPase_2"/>
    <property type="match status" value="1"/>
</dbReference>
<dbReference type="CDD" id="cd04472">
    <property type="entry name" value="S1_PNPase"/>
    <property type="match status" value="1"/>
</dbReference>
<dbReference type="FunFam" id="3.30.1370.10:FF:000001">
    <property type="entry name" value="Polyribonucleotide nucleotidyltransferase"/>
    <property type="match status" value="1"/>
</dbReference>
<dbReference type="FunFam" id="3.30.230.70:FF:000001">
    <property type="entry name" value="Polyribonucleotide nucleotidyltransferase"/>
    <property type="match status" value="1"/>
</dbReference>
<dbReference type="FunFam" id="3.30.230.70:FF:000002">
    <property type="entry name" value="Polyribonucleotide nucleotidyltransferase"/>
    <property type="match status" value="1"/>
</dbReference>
<dbReference type="FunFam" id="2.40.50.140:FF:000189">
    <property type="entry name" value="Polyribonucleotide nucleotidyltransferase, putative"/>
    <property type="match status" value="1"/>
</dbReference>
<dbReference type="Gene3D" id="3.30.230.70">
    <property type="entry name" value="GHMP Kinase, N-terminal domain"/>
    <property type="match status" value="2"/>
</dbReference>
<dbReference type="Gene3D" id="3.30.1370.10">
    <property type="entry name" value="K Homology domain, type 1"/>
    <property type="match status" value="1"/>
</dbReference>
<dbReference type="Gene3D" id="2.40.50.140">
    <property type="entry name" value="Nucleic acid-binding proteins"/>
    <property type="match status" value="1"/>
</dbReference>
<dbReference type="HAMAP" id="MF_01595">
    <property type="entry name" value="PNPase"/>
    <property type="match status" value="1"/>
</dbReference>
<dbReference type="InterPro" id="IPR001247">
    <property type="entry name" value="ExoRNase_PH_dom1"/>
</dbReference>
<dbReference type="InterPro" id="IPR015847">
    <property type="entry name" value="ExoRNase_PH_dom2"/>
</dbReference>
<dbReference type="InterPro" id="IPR036345">
    <property type="entry name" value="ExoRNase_PH_dom2_sf"/>
</dbReference>
<dbReference type="InterPro" id="IPR004087">
    <property type="entry name" value="KH_dom"/>
</dbReference>
<dbReference type="InterPro" id="IPR004088">
    <property type="entry name" value="KH_dom_type_1"/>
</dbReference>
<dbReference type="InterPro" id="IPR036612">
    <property type="entry name" value="KH_dom_type_1_sf"/>
</dbReference>
<dbReference type="InterPro" id="IPR012340">
    <property type="entry name" value="NA-bd_OB-fold"/>
</dbReference>
<dbReference type="InterPro" id="IPR012162">
    <property type="entry name" value="PNPase"/>
</dbReference>
<dbReference type="InterPro" id="IPR027408">
    <property type="entry name" value="PNPase/RNase_PH_dom_sf"/>
</dbReference>
<dbReference type="InterPro" id="IPR015848">
    <property type="entry name" value="PNPase_PH_RNA-bd_bac/org-type"/>
</dbReference>
<dbReference type="InterPro" id="IPR020568">
    <property type="entry name" value="Ribosomal_Su5_D2-typ_SF"/>
</dbReference>
<dbReference type="InterPro" id="IPR003029">
    <property type="entry name" value="S1_domain"/>
</dbReference>
<dbReference type="NCBIfam" id="TIGR03591">
    <property type="entry name" value="polynuc_phos"/>
    <property type="match status" value="1"/>
</dbReference>
<dbReference type="NCBIfam" id="NF008805">
    <property type="entry name" value="PRK11824.1"/>
    <property type="match status" value="1"/>
</dbReference>
<dbReference type="PANTHER" id="PTHR11252">
    <property type="entry name" value="POLYRIBONUCLEOTIDE NUCLEOTIDYLTRANSFERASE"/>
    <property type="match status" value="1"/>
</dbReference>
<dbReference type="PANTHER" id="PTHR11252:SF0">
    <property type="entry name" value="POLYRIBONUCLEOTIDE NUCLEOTIDYLTRANSFERASE 1, MITOCHONDRIAL"/>
    <property type="match status" value="1"/>
</dbReference>
<dbReference type="Pfam" id="PF00013">
    <property type="entry name" value="KH_1"/>
    <property type="match status" value="1"/>
</dbReference>
<dbReference type="Pfam" id="PF03726">
    <property type="entry name" value="PNPase"/>
    <property type="match status" value="1"/>
</dbReference>
<dbReference type="Pfam" id="PF01138">
    <property type="entry name" value="RNase_PH"/>
    <property type="match status" value="2"/>
</dbReference>
<dbReference type="Pfam" id="PF03725">
    <property type="entry name" value="RNase_PH_C"/>
    <property type="match status" value="2"/>
</dbReference>
<dbReference type="Pfam" id="PF00575">
    <property type="entry name" value="S1"/>
    <property type="match status" value="1"/>
</dbReference>
<dbReference type="PIRSF" id="PIRSF005499">
    <property type="entry name" value="PNPase"/>
    <property type="match status" value="1"/>
</dbReference>
<dbReference type="SMART" id="SM00322">
    <property type="entry name" value="KH"/>
    <property type="match status" value="1"/>
</dbReference>
<dbReference type="SMART" id="SM00316">
    <property type="entry name" value="S1"/>
    <property type="match status" value="1"/>
</dbReference>
<dbReference type="SUPFAM" id="SSF54791">
    <property type="entry name" value="Eukaryotic type KH-domain (KH-domain type I)"/>
    <property type="match status" value="1"/>
</dbReference>
<dbReference type="SUPFAM" id="SSF50249">
    <property type="entry name" value="Nucleic acid-binding proteins"/>
    <property type="match status" value="1"/>
</dbReference>
<dbReference type="SUPFAM" id="SSF55666">
    <property type="entry name" value="Ribonuclease PH domain 2-like"/>
    <property type="match status" value="2"/>
</dbReference>
<dbReference type="SUPFAM" id="SSF54211">
    <property type="entry name" value="Ribosomal protein S5 domain 2-like"/>
    <property type="match status" value="2"/>
</dbReference>
<dbReference type="PROSITE" id="PS50084">
    <property type="entry name" value="KH_TYPE_1"/>
    <property type="match status" value="1"/>
</dbReference>
<dbReference type="PROSITE" id="PS50126">
    <property type="entry name" value="S1"/>
    <property type="match status" value="1"/>
</dbReference>
<keyword id="KW-0963">Cytoplasm</keyword>
<keyword id="KW-0460">Magnesium</keyword>
<keyword id="KW-0479">Metal-binding</keyword>
<keyword id="KW-0548">Nucleotidyltransferase</keyword>
<keyword id="KW-1185">Reference proteome</keyword>
<keyword id="KW-0694">RNA-binding</keyword>
<keyword id="KW-0808">Transferase</keyword>
<protein>
    <recommendedName>
        <fullName evidence="1">Polyribonucleotide nucleotidyltransferase</fullName>
        <ecNumber evidence="1">2.7.7.8</ecNumber>
    </recommendedName>
    <alternativeName>
        <fullName evidence="1">Polynucleotide phosphorylase</fullName>
        <shortName evidence="1">PNPase</shortName>
    </alternativeName>
</protein>
<name>PNP_THIDA</name>
<evidence type="ECO:0000255" key="1">
    <source>
        <dbReference type="HAMAP-Rule" id="MF_01595"/>
    </source>
</evidence>
<feature type="chain" id="PRO_0000329918" description="Polyribonucleotide nucleotidyltransferase">
    <location>
        <begin position="1"/>
        <end position="706"/>
    </location>
</feature>
<feature type="domain" description="KH" evidence="1">
    <location>
        <begin position="552"/>
        <end position="611"/>
    </location>
</feature>
<feature type="domain" description="S1 motif" evidence="1">
    <location>
        <begin position="621"/>
        <end position="689"/>
    </location>
</feature>
<feature type="binding site" evidence="1">
    <location>
        <position position="486"/>
    </location>
    <ligand>
        <name>Mg(2+)</name>
        <dbReference type="ChEBI" id="CHEBI:18420"/>
    </ligand>
</feature>
<feature type="binding site" evidence="1">
    <location>
        <position position="492"/>
    </location>
    <ligand>
        <name>Mg(2+)</name>
        <dbReference type="ChEBI" id="CHEBI:18420"/>
    </ligand>
</feature>